<feature type="chain" id="PRO_1000148270" description="Phosphoribosylformylglycinamidine cyclo-ligase">
    <location>
        <begin position="1"/>
        <end position="346"/>
    </location>
</feature>
<keyword id="KW-0067">ATP-binding</keyword>
<keyword id="KW-0963">Cytoplasm</keyword>
<keyword id="KW-0436">Ligase</keyword>
<keyword id="KW-0547">Nucleotide-binding</keyword>
<keyword id="KW-0658">Purine biosynthesis</keyword>
<keyword id="KW-1185">Reference proteome</keyword>
<evidence type="ECO:0000255" key="1">
    <source>
        <dbReference type="HAMAP-Rule" id="MF_00741"/>
    </source>
</evidence>
<accession>C0ZKC8</accession>
<organism>
    <name type="scientific">Brevibacillus brevis (strain 47 / JCM 6285 / NBRC 100599)</name>
    <dbReference type="NCBI Taxonomy" id="358681"/>
    <lineage>
        <taxon>Bacteria</taxon>
        <taxon>Bacillati</taxon>
        <taxon>Bacillota</taxon>
        <taxon>Bacilli</taxon>
        <taxon>Bacillales</taxon>
        <taxon>Paenibacillaceae</taxon>
        <taxon>Brevibacillus</taxon>
    </lineage>
</organism>
<name>PUR5_BREBN</name>
<proteinExistence type="inferred from homology"/>
<comment type="catalytic activity">
    <reaction evidence="1">
        <text>2-formamido-N(1)-(5-O-phospho-beta-D-ribosyl)acetamidine + ATP = 5-amino-1-(5-phospho-beta-D-ribosyl)imidazole + ADP + phosphate + H(+)</text>
        <dbReference type="Rhea" id="RHEA:23032"/>
        <dbReference type="ChEBI" id="CHEBI:15378"/>
        <dbReference type="ChEBI" id="CHEBI:30616"/>
        <dbReference type="ChEBI" id="CHEBI:43474"/>
        <dbReference type="ChEBI" id="CHEBI:137981"/>
        <dbReference type="ChEBI" id="CHEBI:147287"/>
        <dbReference type="ChEBI" id="CHEBI:456216"/>
        <dbReference type="EC" id="6.3.3.1"/>
    </reaction>
</comment>
<comment type="pathway">
    <text evidence="1">Purine metabolism; IMP biosynthesis via de novo pathway; 5-amino-1-(5-phospho-D-ribosyl)imidazole from N(2)-formyl-N(1)-(5-phospho-D-ribosyl)glycinamide: step 2/2.</text>
</comment>
<comment type="subcellular location">
    <subcellularLocation>
        <location evidence="1">Cytoplasm</location>
    </subcellularLocation>
</comment>
<comment type="similarity">
    <text evidence="1">Belongs to the AIR synthase family.</text>
</comment>
<protein>
    <recommendedName>
        <fullName evidence="1">Phosphoribosylformylglycinamidine cyclo-ligase</fullName>
        <ecNumber evidence="1">6.3.3.1</ecNumber>
    </recommendedName>
    <alternativeName>
        <fullName evidence="1">AIR synthase</fullName>
    </alternativeName>
    <alternativeName>
        <fullName evidence="1">AIRS</fullName>
    </alternativeName>
    <alternativeName>
        <fullName evidence="1">Phosphoribosyl-aminoimidazole synthetase</fullName>
    </alternativeName>
</protein>
<sequence length="346" mass="37155">MSEAYKQAGVDIDAGNEAVERMKKHVKRTFRPEVMTDLGGFGALFRLDTKKYEKPILVSGTDGVGTKLKLAFAMDKHDTIGIDAVAMCVNDVVVQGAEPLFFLDYLAVDKVIPEKIEAIVKGIAEGCSQSGCSLIGGETAEMPGMYAEGEYDIAGFTVGVVDESKMITGASVAAGDVLIGLASSGVHSNGFSLVRKVLLADKGMSLHDHVDVLGKKLGEELLTPTRIYVKQVLSVLESHEVKALVHITGGGFTENIPRVLPEGMQAVINVGSWPVLPIFELVQGAGNISYPDMYKTFNMGIGMMLVVKPEDAVSVMEKLQELGEQAYLIGNIQAGERKVVYNGVEW</sequence>
<dbReference type="EC" id="6.3.3.1" evidence="1"/>
<dbReference type="EMBL" id="AP008955">
    <property type="protein sequence ID" value="BAH41579.1"/>
    <property type="molecule type" value="Genomic_DNA"/>
</dbReference>
<dbReference type="RefSeq" id="WP_012684345.1">
    <property type="nucleotide sequence ID" value="NC_012491.1"/>
</dbReference>
<dbReference type="SMR" id="C0ZKC8"/>
<dbReference type="STRING" id="358681.BBR47_06020"/>
<dbReference type="KEGG" id="bbe:BBR47_06020"/>
<dbReference type="eggNOG" id="COG0150">
    <property type="taxonomic scope" value="Bacteria"/>
</dbReference>
<dbReference type="HOGENOM" id="CLU_047116_0_0_9"/>
<dbReference type="UniPathway" id="UPA00074">
    <property type="reaction ID" value="UER00129"/>
</dbReference>
<dbReference type="Proteomes" id="UP000001877">
    <property type="component" value="Chromosome"/>
</dbReference>
<dbReference type="GO" id="GO:0005829">
    <property type="term" value="C:cytosol"/>
    <property type="evidence" value="ECO:0007669"/>
    <property type="project" value="TreeGrafter"/>
</dbReference>
<dbReference type="GO" id="GO:0005524">
    <property type="term" value="F:ATP binding"/>
    <property type="evidence" value="ECO:0007669"/>
    <property type="project" value="UniProtKB-KW"/>
</dbReference>
<dbReference type="GO" id="GO:0004637">
    <property type="term" value="F:phosphoribosylamine-glycine ligase activity"/>
    <property type="evidence" value="ECO:0007669"/>
    <property type="project" value="TreeGrafter"/>
</dbReference>
<dbReference type="GO" id="GO:0004641">
    <property type="term" value="F:phosphoribosylformylglycinamidine cyclo-ligase activity"/>
    <property type="evidence" value="ECO:0007669"/>
    <property type="project" value="UniProtKB-UniRule"/>
</dbReference>
<dbReference type="GO" id="GO:0006189">
    <property type="term" value="P:'de novo' IMP biosynthetic process"/>
    <property type="evidence" value="ECO:0007669"/>
    <property type="project" value="UniProtKB-UniRule"/>
</dbReference>
<dbReference type="GO" id="GO:0046084">
    <property type="term" value="P:adenine biosynthetic process"/>
    <property type="evidence" value="ECO:0007669"/>
    <property type="project" value="TreeGrafter"/>
</dbReference>
<dbReference type="CDD" id="cd02196">
    <property type="entry name" value="PurM"/>
    <property type="match status" value="1"/>
</dbReference>
<dbReference type="FunFam" id="3.30.1330.10:FF:000001">
    <property type="entry name" value="Phosphoribosylformylglycinamidine cyclo-ligase"/>
    <property type="match status" value="1"/>
</dbReference>
<dbReference type="FunFam" id="3.90.650.10:FF:000001">
    <property type="entry name" value="Phosphoribosylformylglycinamidine cyclo-ligase"/>
    <property type="match status" value="1"/>
</dbReference>
<dbReference type="Gene3D" id="3.90.650.10">
    <property type="entry name" value="PurM-like C-terminal domain"/>
    <property type="match status" value="1"/>
</dbReference>
<dbReference type="Gene3D" id="3.30.1330.10">
    <property type="entry name" value="PurM-like, N-terminal domain"/>
    <property type="match status" value="1"/>
</dbReference>
<dbReference type="HAMAP" id="MF_00741">
    <property type="entry name" value="AIRS"/>
    <property type="match status" value="1"/>
</dbReference>
<dbReference type="InterPro" id="IPR010918">
    <property type="entry name" value="PurM-like_C_dom"/>
</dbReference>
<dbReference type="InterPro" id="IPR036676">
    <property type="entry name" value="PurM-like_C_sf"/>
</dbReference>
<dbReference type="InterPro" id="IPR016188">
    <property type="entry name" value="PurM-like_N"/>
</dbReference>
<dbReference type="InterPro" id="IPR036921">
    <property type="entry name" value="PurM-like_N_sf"/>
</dbReference>
<dbReference type="InterPro" id="IPR004733">
    <property type="entry name" value="PurM_cligase"/>
</dbReference>
<dbReference type="NCBIfam" id="TIGR00878">
    <property type="entry name" value="purM"/>
    <property type="match status" value="1"/>
</dbReference>
<dbReference type="PANTHER" id="PTHR10520:SF12">
    <property type="entry name" value="TRIFUNCTIONAL PURINE BIOSYNTHETIC PROTEIN ADENOSINE-3"/>
    <property type="match status" value="1"/>
</dbReference>
<dbReference type="PANTHER" id="PTHR10520">
    <property type="entry name" value="TRIFUNCTIONAL PURINE BIOSYNTHETIC PROTEIN ADENOSINE-3-RELATED"/>
    <property type="match status" value="1"/>
</dbReference>
<dbReference type="Pfam" id="PF00586">
    <property type="entry name" value="AIRS"/>
    <property type="match status" value="1"/>
</dbReference>
<dbReference type="Pfam" id="PF02769">
    <property type="entry name" value="AIRS_C"/>
    <property type="match status" value="1"/>
</dbReference>
<dbReference type="SUPFAM" id="SSF56042">
    <property type="entry name" value="PurM C-terminal domain-like"/>
    <property type="match status" value="1"/>
</dbReference>
<dbReference type="SUPFAM" id="SSF55326">
    <property type="entry name" value="PurM N-terminal domain-like"/>
    <property type="match status" value="1"/>
</dbReference>
<reference key="1">
    <citation type="submission" date="2005-03" db="EMBL/GenBank/DDBJ databases">
        <title>Brevibacillus brevis strain 47, complete genome.</title>
        <authorList>
            <person name="Hosoyama A."/>
            <person name="Yamada R."/>
            <person name="Hongo Y."/>
            <person name="Terui Y."/>
            <person name="Ankai A."/>
            <person name="Masuyama W."/>
            <person name="Sekiguchi M."/>
            <person name="Takeda T."/>
            <person name="Asano K."/>
            <person name="Ohji S."/>
            <person name="Ichikawa N."/>
            <person name="Narita S."/>
            <person name="Aoki N."/>
            <person name="Miura H."/>
            <person name="Matsushita S."/>
            <person name="Sekigawa T."/>
            <person name="Yamagata H."/>
            <person name="Yoshikawa H."/>
            <person name="Udaka S."/>
            <person name="Tanikawa S."/>
            <person name="Fujita N."/>
        </authorList>
    </citation>
    <scope>NUCLEOTIDE SEQUENCE [LARGE SCALE GENOMIC DNA]</scope>
    <source>
        <strain>47 / JCM 6285 / NBRC 100599</strain>
    </source>
</reference>
<gene>
    <name evidence="1" type="primary">purM</name>
    <name type="ordered locus">BBR47_06020</name>
</gene>